<protein>
    <recommendedName>
        <fullName evidence="1">Sulfate adenylyltransferase</fullName>
        <ecNumber evidence="1">2.7.7.4</ecNumber>
    </recommendedName>
    <alternativeName>
        <fullName evidence="1">ATP-sulfurylase</fullName>
    </alternativeName>
    <alternativeName>
        <fullName evidence="1">Sulfate adenylate transferase</fullName>
        <shortName evidence="1">SAT</shortName>
    </alternativeName>
</protein>
<accession>Q3MAI6</accession>
<dbReference type="EC" id="2.7.7.4" evidence="1"/>
<dbReference type="EMBL" id="CP000117">
    <property type="protein sequence ID" value="ABA22000.1"/>
    <property type="molecule type" value="Genomic_DNA"/>
</dbReference>
<dbReference type="SMR" id="Q3MAI6"/>
<dbReference type="STRING" id="240292.Ava_2382"/>
<dbReference type="KEGG" id="ava:Ava_2382"/>
<dbReference type="eggNOG" id="COG2046">
    <property type="taxonomic scope" value="Bacteria"/>
</dbReference>
<dbReference type="HOGENOM" id="CLU_022950_1_1_3"/>
<dbReference type="UniPathway" id="UPA00140">
    <property type="reaction ID" value="UER00204"/>
</dbReference>
<dbReference type="Proteomes" id="UP000002533">
    <property type="component" value="Chromosome"/>
</dbReference>
<dbReference type="GO" id="GO:0005524">
    <property type="term" value="F:ATP binding"/>
    <property type="evidence" value="ECO:0007669"/>
    <property type="project" value="UniProtKB-KW"/>
</dbReference>
<dbReference type="GO" id="GO:0004781">
    <property type="term" value="F:sulfate adenylyltransferase (ATP) activity"/>
    <property type="evidence" value="ECO:0007669"/>
    <property type="project" value="UniProtKB-UniRule"/>
</dbReference>
<dbReference type="GO" id="GO:0070814">
    <property type="term" value="P:hydrogen sulfide biosynthetic process"/>
    <property type="evidence" value="ECO:0007669"/>
    <property type="project" value="UniProtKB-UniRule"/>
</dbReference>
<dbReference type="GO" id="GO:0000103">
    <property type="term" value="P:sulfate assimilation"/>
    <property type="evidence" value="ECO:0007669"/>
    <property type="project" value="UniProtKB-UniRule"/>
</dbReference>
<dbReference type="CDD" id="cd00517">
    <property type="entry name" value="ATPS"/>
    <property type="match status" value="1"/>
</dbReference>
<dbReference type="Gene3D" id="3.40.50.620">
    <property type="entry name" value="HUPs"/>
    <property type="match status" value="1"/>
</dbReference>
<dbReference type="Gene3D" id="3.10.400.10">
    <property type="entry name" value="Sulfate adenylyltransferase"/>
    <property type="match status" value="1"/>
</dbReference>
<dbReference type="HAMAP" id="MF_00066">
    <property type="entry name" value="Sulf_adenylyltr"/>
    <property type="match status" value="1"/>
</dbReference>
<dbReference type="InterPro" id="IPR025980">
    <property type="entry name" value="ATP-Sase_PUA-like_dom"/>
</dbReference>
<dbReference type="InterPro" id="IPR015947">
    <property type="entry name" value="PUA-like_sf"/>
</dbReference>
<dbReference type="InterPro" id="IPR014729">
    <property type="entry name" value="Rossmann-like_a/b/a_fold"/>
</dbReference>
<dbReference type="InterPro" id="IPR020792">
    <property type="entry name" value="SO4_adenylyltransferase_pro"/>
</dbReference>
<dbReference type="InterPro" id="IPR024951">
    <property type="entry name" value="Sulfurylase_cat_dom"/>
</dbReference>
<dbReference type="InterPro" id="IPR002650">
    <property type="entry name" value="Sulphate_adenylyltransferase"/>
</dbReference>
<dbReference type="NCBIfam" id="NF003166">
    <property type="entry name" value="PRK04149.1"/>
    <property type="match status" value="1"/>
</dbReference>
<dbReference type="NCBIfam" id="TIGR00339">
    <property type="entry name" value="sopT"/>
    <property type="match status" value="1"/>
</dbReference>
<dbReference type="PANTHER" id="PTHR43509">
    <property type="match status" value="1"/>
</dbReference>
<dbReference type="PANTHER" id="PTHR43509:SF1">
    <property type="entry name" value="SULFATE ADENYLYLTRANSFERASE"/>
    <property type="match status" value="1"/>
</dbReference>
<dbReference type="Pfam" id="PF01747">
    <property type="entry name" value="ATP-sulfurylase"/>
    <property type="match status" value="1"/>
</dbReference>
<dbReference type="Pfam" id="PF14306">
    <property type="entry name" value="PUA_2"/>
    <property type="match status" value="1"/>
</dbReference>
<dbReference type="SUPFAM" id="SSF52374">
    <property type="entry name" value="Nucleotidylyl transferase"/>
    <property type="match status" value="1"/>
</dbReference>
<dbReference type="SUPFAM" id="SSF88697">
    <property type="entry name" value="PUA domain-like"/>
    <property type="match status" value="1"/>
</dbReference>
<comment type="catalytic activity">
    <reaction evidence="1">
        <text>sulfate + ATP + H(+) = adenosine 5'-phosphosulfate + diphosphate</text>
        <dbReference type="Rhea" id="RHEA:18133"/>
        <dbReference type="ChEBI" id="CHEBI:15378"/>
        <dbReference type="ChEBI" id="CHEBI:16189"/>
        <dbReference type="ChEBI" id="CHEBI:30616"/>
        <dbReference type="ChEBI" id="CHEBI:33019"/>
        <dbReference type="ChEBI" id="CHEBI:58243"/>
        <dbReference type="EC" id="2.7.7.4"/>
    </reaction>
</comment>
<comment type="pathway">
    <text evidence="1">Sulfur metabolism; hydrogen sulfide biosynthesis; sulfite from sulfate: step 1/3.</text>
</comment>
<comment type="similarity">
    <text evidence="1">Belongs to the sulfate adenylyltransferase family.</text>
</comment>
<organism>
    <name type="scientific">Trichormus variabilis (strain ATCC 29413 / PCC 7937)</name>
    <name type="common">Anabaena variabilis</name>
    <dbReference type="NCBI Taxonomy" id="240292"/>
    <lineage>
        <taxon>Bacteria</taxon>
        <taxon>Bacillati</taxon>
        <taxon>Cyanobacteriota</taxon>
        <taxon>Cyanophyceae</taxon>
        <taxon>Nostocales</taxon>
        <taxon>Nostocaceae</taxon>
        <taxon>Trichormus</taxon>
    </lineage>
</organism>
<evidence type="ECO:0000255" key="1">
    <source>
        <dbReference type="HAMAP-Rule" id="MF_00066"/>
    </source>
</evidence>
<proteinExistence type="inferred from homology"/>
<name>SAT_TRIV2</name>
<reference key="1">
    <citation type="journal article" date="2014" name="Stand. Genomic Sci.">
        <title>Complete genome sequence of Anabaena variabilis ATCC 29413.</title>
        <authorList>
            <person name="Thiel T."/>
            <person name="Pratte B.S."/>
            <person name="Zhong J."/>
            <person name="Goodwin L."/>
            <person name="Copeland A."/>
            <person name="Lucas S."/>
            <person name="Han C."/>
            <person name="Pitluck S."/>
            <person name="Land M.L."/>
            <person name="Kyrpides N.C."/>
            <person name="Woyke T."/>
        </authorList>
    </citation>
    <scope>NUCLEOTIDE SEQUENCE [LARGE SCALE GENOMIC DNA]</scope>
    <source>
        <strain>ATCC 29413 / PCC 7937</strain>
    </source>
</reference>
<keyword id="KW-0067">ATP-binding</keyword>
<keyword id="KW-0547">Nucleotide-binding</keyword>
<keyword id="KW-0548">Nucleotidyltransferase</keyword>
<keyword id="KW-0808">Transferase</keyword>
<feature type="chain" id="PRO_0000340606" description="Sulfate adenylyltransferase">
    <location>
        <begin position="1"/>
        <end position="392"/>
    </location>
</feature>
<gene>
    <name evidence="1" type="primary">sat</name>
    <name type="ordered locus">Ava_2382</name>
</gene>
<sequence length="392" mass="44312">MSQHPEAIAAHGGQLVNRVATPAQREEFVSKAEFLPRVQLDERAVSDLEMIAIGGFSPLTGFMNQEDYDRVVSEMRLANGLVWSIPITLSVSEEVASSLQEGGLVRLDNPAGDYIGVLQLTQKYRYDKTREAINVYRTDDAKHPGVQVLYNQGAVNLAGDIWLLERSSHPLFPDYQIDPVASRQMFRDKGWKTIVGFQTRNPIHRAHEYIQKCALETVDGLFLHPLVGATKEDDIAADVRMRCYEILLEHYYPEDRVILAINPAAMRYAGPREAIFHALVRKNYGCTHFIVGRDHAGVGDYYGTYDAQYIFDEFEPGELGIVPMKFEHAFYCTRTKQMATTKTSPSRPEERVHLSGTKVREMLRRGELPPPEFSRPEVAAELARAMRVQVLA</sequence>